<gene>
    <name type="primary">mybW</name>
    <name type="ORF">DDB_G0270346</name>
</gene>
<keyword id="KW-1185">Reference proteome</keyword>
<proteinExistence type="predicted"/>
<dbReference type="EMBL" id="AAFI02000005">
    <property type="protein sequence ID" value="EAL72523.1"/>
    <property type="molecule type" value="Genomic_DNA"/>
</dbReference>
<dbReference type="RefSeq" id="XP_646724.1">
    <property type="nucleotide sequence ID" value="XM_641632.1"/>
</dbReference>
<dbReference type="SMR" id="Q55BV7"/>
<dbReference type="STRING" id="44689.Q55BV7"/>
<dbReference type="PaxDb" id="44689-DDB0220519"/>
<dbReference type="EnsemblProtists" id="EAL72523">
    <property type="protein sequence ID" value="EAL72523"/>
    <property type="gene ID" value="DDB_G0270346"/>
</dbReference>
<dbReference type="GeneID" id="8617696"/>
<dbReference type="KEGG" id="ddi:DDB_G0270346"/>
<dbReference type="dictyBase" id="DDB_G0270346">
    <property type="gene designation" value="mybW"/>
</dbReference>
<dbReference type="VEuPathDB" id="AmoebaDB:DDB_G0270346"/>
<dbReference type="eggNOG" id="ENOG502RI7W">
    <property type="taxonomic scope" value="Eukaryota"/>
</dbReference>
<dbReference type="HOGENOM" id="CLU_411311_0_0_1"/>
<dbReference type="InParanoid" id="Q55BV7"/>
<dbReference type="OMA" id="MVNSEEW"/>
<dbReference type="PRO" id="PR:Q55BV7"/>
<dbReference type="Proteomes" id="UP000002195">
    <property type="component" value="Chromosome 1"/>
</dbReference>
<dbReference type="GO" id="GO:0004402">
    <property type="term" value="F:histone acetyltransferase activity"/>
    <property type="evidence" value="ECO:0000318"/>
    <property type="project" value="GO_Central"/>
</dbReference>
<dbReference type="CDD" id="cd00167">
    <property type="entry name" value="SANT"/>
    <property type="match status" value="1"/>
</dbReference>
<dbReference type="Gene3D" id="1.10.10.60">
    <property type="entry name" value="Homeodomain-like"/>
    <property type="match status" value="1"/>
</dbReference>
<dbReference type="InterPro" id="IPR009057">
    <property type="entry name" value="Homeodomain-like_sf"/>
</dbReference>
<dbReference type="InterPro" id="IPR001005">
    <property type="entry name" value="SANT/Myb"/>
</dbReference>
<dbReference type="PANTHER" id="PTHR36911:SF1">
    <property type="entry name" value="LIM ZINC-BINDING DOMAIN-CONTAINING PROTEIN"/>
    <property type="match status" value="1"/>
</dbReference>
<dbReference type="PANTHER" id="PTHR36911">
    <property type="entry name" value="LIM ZINC-BINDING DOMAIN-CONTAINING PROTEIN-RELATED"/>
    <property type="match status" value="1"/>
</dbReference>
<dbReference type="SMART" id="SM00717">
    <property type="entry name" value="SANT"/>
    <property type="match status" value="1"/>
</dbReference>
<dbReference type="SUPFAM" id="SSF46689">
    <property type="entry name" value="Homeodomain-like"/>
    <property type="match status" value="1"/>
</dbReference>
<dbReference type="PROSITE" id="PS50090">
    <property type="entry name" value="MYB_LIKE"/>
    <property type="match status" value="1"/>
</dbReference>
<organism>
    <name type="scientific">Dictyostelium discoideum</name>
    <name type="common">Social amoeba</name>
    <dbReference type="NCBI Taxonomy" id="44689"/>
    <lineage>
        <taxon>Eukaryota</taxon>
        <taxon>Amoebozoa</taxon>
        <taxon>Evosea</taxon>
        <taxon>Eumycetozoa</taxon>
        <taxon>Dictyostelia</taxon>
        <taxon>Dictyosteliales</taxon>
        <taxon>Dictyosteliaceae</taxon>
        <taxon>Dictyostelium</taxon>
    </lineage>
</organism>
<accession>Q55BV7</accession>
<reference key="1">
    <citation type="journal article" date="2005" name="Nature">
        <title>The genome of the social amoeba Dictyostelium discoideum.</title>
        <authorList>
            <person name="Eichinger L."/>
            <person name="Pachebat J.A."/>
            <person name="Gloeckner G."/>
            <person name="Rajandream M.A."/>
            <person name="Sucgang R."/>
            <person name="Berriman M."/>
            <person name="Song J."/>
            <person name="Olsen R."/>
            <person name="Szafranski K."/>
            <person name="Xu Q."/>
            <person name="Tunggal B."/>
            <person name="Kummerfeld S."/>
            <person name="Madera M."/>
            <person name="Konfortov B.A."/>
            <person name="Rivero F."/>
            <person name="Bankier A.T."/>
            <person name="Lehmann R."/>
            <person name="Hamlin N."/>
            <person name="Davies R."/>
            <person name="Gaudet P."/>
            <person name="Fey P."/>
            <person name="Pilcher K."/>
            <person name="Chen G."/>
            <person name="Saunders D."/>
            <person name="Sodergren E.J."/>
            <person name="Davis P."/>
            <person name="Kerhornou A."/>
            <person name="Nie X."/>
            <person name="Hall N."/>
            <person name="Anjard C."/>
            <person name="Hemphill L."/>
            <person name="Bason N."/>
            <person name="Farbrother P."/>
            <person name="Desany B."/>
            <person name="Just E."/>
            <person name="Morio T."/>
            <person name="Rost R."/>
            <person name="Churcher C.M."/>
            <person name="Cooper J."/>
            <person name="Haydock S."/>
            <person name="van Driessche N."/>
            <person name="Cronin A."/>
            <person name="Goodhead I."/>
            <person name="Muzny D.M."/>
            <person name="Mourier T."/>
            <person name="Pain A."/>
            <person name="Lu M."/>
            <person name="Harper D."/>
            <person name="Lindsay R."/>
            <person name="Hauser H."/>
            <person name="James K.D."/>
            <person name="Quiles M."/>
            <person name="Madan Babu M."/>
            <person name="Saito T."/>
            <person name="Buchrieser C."/>
            <person name="Wardroper A."/>
            <person name="Felder M."/>
            <person name="Thangavelu M."/>
            <person name="Johnson D."/>
            <person name="Knights A."/>
            <person name="Loulseged H."/>
            <person name="Mungall K.L."/>
            <person name="Oliver K."/>
            <person name="Price C."/>
            <person name="Quail M.A."/>
            <person name="Urushihara H."/>
            <person name="Hernandez J."/>
            <person name="Rabbinowitsch E."/>
            <person name="Steffen D."/>
            <person name="Sanders M."/>
            <person name="Ma J."/>
            <person name="Kohara Y."/>
            <person name="Sharp S."/>
            <person name="Simmonds M.N."/>
            <person name="Spiegler S."/>
            <person name="Tivey A."/>
            <person name="Sugano S."/>
            <person name="White B."/>
            <person name="Walker D."/>
            <person name="Woodward J.R."/>
            <person name="Winckler T."/>
            <person name="Tanaka Y."/>
            <person name="Shaulsky G."/>
            <person name="Schleicher M."/>
            <person name="Weinstock G.M."/>
            <person name="Rosenthal A."/>
            <person name="Cox E.C."/>
            <person name="Chisholm R.L."/>
            <person name="Gibbs R.A."/>
            <person name="Loomis W.F."/>
            <person name="Platzer M."/>
            <person name="Kay R.R."/>
            <person name="Williams J.G."/>
            <person name="Dear P.H."/>
            <person name="Noegel A.A."/>
            <person name="Barrell B.G."/>
            <person name="Kuspa A."/>
        </authorList>
    </citation>
    <scope>NUCLEOTIDE SEQUENCE [LARGE SCALE GENOMIC DNA]</scope>
    <source>
        <strain>AX4</strain>
    </source>
</reference>
<protein>
    <recommendedName>
        <fullName>Myb-like protein W</fullName>
    </recommendedName>
</protein>
<sequence length="668" mass="78645">MAEQDLFSLALERKHLYLKTHYNNINNLEGMNILQKSLLYRTYLPFYQIQKEQAQQLDQFQKEKQSVHNNNNNNNSNNNNNNNNNNNNNNNNNNNNNNNNNNNNNNNNNNYNNYNNNNNNNESVNNIIINSEPVYTNGGNEKEDEKEYANIHSDKIKIDYVDLIGKPYILDKDGFLPPPLSKQEITFWVSQKLTETDFSIIDYYFNDIRKSDYEKKKHIKKFERKQRQKEKEELKLKEKEELKLKEKEKRKKEREEREEREKQEKQEQEQQQQPPKKKLKETNKSLTLSTTINNKDNNHNGYYYYYDNDNDNYNDGDDEKEKEKEKEKEKEKENENENEDENDTSMVNSEEWTEEEVNKMNEIRGKLSTADYNYWDKVSAHVKSKTAEQCQRKYNSRFLTPLKPKSKLKSSSKPGIPTSPITMKTNPHTDKGKRKIRQITDETIMKQKHDLFNSFKTTKRVDYLEPLDEVVTTTNDVENLDFGEDLDKAFSAVNVNYTNTNNNNNNNNNNNNNNNNNNNNNNNNNNNNNNNNNNNNNNNNNNNKERKRIDREHWDSYIRNSMGRFSAKPPPIKTTTTTTTTTSDSTLASINNINNNNNNNNNDDILKKPFSIFDESSQKKSAEIISKISSQCEERKKKEDRDVDEDGEDDYYFGGDNSKNGDDDDEII</sequence>
<name>MYBW_DICDI</name>
<evidence type="ECO:0000255" key="1">
    <source>
        <dbReference type="PROSITE-ProRule" id="PRU00133"/>
    </source>
</evidence>
<evidence type="ECO:0000256" key="2">
    <source>
        <dbReference type="SAM" id="MobiDB-lite"/>
    </source>
</evidence>
<feature type="chain" id="PRO_0000329395" description="Myb-like protein W">
    <location>
        <begin position="1"/>
        <end position="668"/>
    </location>
</feature>
<feature type="domain" description="Myb-like" evidence="1">
    <location>
        <begin position="344"/>
        <end position="398"/>
    </location>
</feature>
<feature type="region of interest" description="Disordered" evidence="2">
    <location>
        <begin position="57"/>
        <end position="124"/>
    </location>
</feature>
<feature type="region of interest" description="Disordered" evidence="2">
    <location>
        <begin position="246"/>
        <end position="357"/>
    </location>
</feature>
<feature type="region of interest" description="Disordered" evidence="2">
    <location>
        <begin position="403"/>
        <end position="432"/>
    </location>
</feature>
<feature type="region of interest" description="Disordered" evidence="2">
    <location>
        <begin position="497"/>
        <end position="546"/>
    </location>
</feature>
<feature type="region of interest" description="Disordered" evidence="2">
    <location>
        <begin position="561"/>
        <end position="583"/>
    </location>
</feature>
<feature type="region of interest" description="Disordered" evidence="2">
    <location>
        <begin position="631"/>
        <end position="668"/>
    </location>
</feature>
<feature type="compositionally biased region" description="Low complexity" evidence="2">
    <location>
        <begin position="69"/>
        <end position="121"/>
    </location>
</feature>
<feature type="compositionally biased region" description="Basic and acidic residues" evidence="2">
    <location>
        <begin position="246"/>
        <end position="268"/>
    </location>
</feature>
<feature type="compositionally biased region" description="Low complexity" evidence="2">
    <location>
        <begin position="293"/>
        <end position="307"/>
    </location>
</feature>
<feature type="compositionally biased region" description="Acidic residues" evidence="2">
    <location>
        <begin position="308"/>
        <end position="318"/>
    </location>
</feature>
<feature type="compositionally biased region" description="Basic and acidic residues" evidence="2">
    <location>
        <begin position="319"/>
        <end position="335"/>
    </location>
</feature>
<feature type="compositionally biased region" description="Low complexity" evidence="2">
    <location>
        <begin position="501"/>
        <end position="542"/>
    </location>
</feature>
<feature type="compositionally biased region" description="Basic and acidic residues" evidence="2">
    <location>
        <begin position="632"/>
        <end position="641"/>
    </location>
</feature>
<feature type="compositionally biased region" description="Acidic residues" evidence="2">
    <location>
        <begin position="642"/>
        <end position="651"/>
    </location>
</feature>